<keyword id="KW-1185">Reference proteome</keyword>
<keyword id="KW-0687">Ribonucleoprotein</keyword>
<keyword id="KW-0689">Ribosomal protein</keyword>
<keyword id="KW-0694">RNA-binding</keyword>
<keyword id="KW-0699">rRNA-binding</keyword>
<comment type="function">
    <text evidence="1">This protein binds to the 23S rRNA, and is important in its secondary structure. It is located near the subunit interface in the base of the L7/L12 stalk, and near the tRNA binding site of the peptidyltransferase center.</text>
</comment>
<comment type="subunit">
    <text evidence="1">Part of the 50S ribosomal subunit.</text>
</comment>
<comment type="similarity">
    <text evidence="1">Belongs to the universal ribosomal protein uL6 family.</text>
</comment>
<evidence type="ECO:0000255" key="1">
    <source>
        <dbReference type="HAMAP-Rule" id="MF_01365"/>
    </source>
</evidence>
<evidence type="ECO:0000305" key="2"/>
<reference key="1">
    <citation type="submission" date="2006-03" db="EMBL/GenBank/DDBJ databases">
        <title>Complete sequence of Methylobacillus flagellatus KT.</title>
        <authorList>
            <consortium name="US DOE Joint Genome Institute"/>
            <person name="Copeland A."/>
            <person name="Lucas S."/>
            <person name="Lapidus A."/>
            <person name="Barry K."/>
            <person name="Detter J.C."/>
            <person name="Glavina del Rio T."/>
            <person name="Hammon N."/>
            <person name="Israni S."/>
            <person name="Dalin E."/>
            <person name="Tice H."/>
            <person name="Pitluck S."/>
            <person name="Brettin T."/>
            <person name="Bruce D."/>
            <person name="Han C."/>
            <person name="Tapia R."/>
            <person name="Saunders E."/>
            <person name="Gilna P."/>
            <person name="Schmutz J."/>
            <person name="Larimer F."/>
            <person name="Land M."/>
            <person name="Kyrpides N."/>
            <person name="Anderson I."/>
            <person name="Richardson P."/>
        </authorList>
    </citation>
    <scope>NUCLEOTIDE SEQUENCE [LARGE SCALE GENOMIC DNA]</scope>
    <source>
        <strain>ATCC 51484 / DSM 6875 / VKM B-1610 / KT</strain>
    </source>
</reference>
<sequence length="177" mass="18682">MSRVAKNPVAIPAKVEVVLSSDNIAVSGPLGKLSLPLSGDVAIERDGDNLTFAAASESQHARAMSGTLRSLVFNMVTGVSQGFTRKLTLLGVGYKAQAQGANLNLDLGFSHPVSHKMPDGVTVQTPSPTEIVLTGADKQVVGQVAAQIRAYRAPEPYKGKGVRYADEVVIIKETKKK</sequence>
<name>RL6_METFK</name>
<dbReference type="EMBL" id="CP000284">
    <property type="protein sequence ID" value="ABE48565.1"/>
    <property type="molecule type" value="Genomic_DNA"/>
</dbReference>
<dbReference type="RefSeq" id="WP_011478662.1">
    <property type="nucleotide sequence ID" value="NC_007947.1"/>
</dbReference>
<dbReference type="SMR" id="Q1H4M2"/>
<dbReference type="STRING" id="265072.Mfla_0294"/>
<dbReference type="KEGG" id="mfa:Mfla_0294"/>
<dbReference type="eggNOG" id="COG0097">
    <property type="taxonomic scope" value="Bacteria"/>
</dbReference>
<dbReference type="HOGENOM" id="CLU_065464_1_2_4"/>
<dbReference type="OrthoDB" id="9805007at2"/>
<dbReference type="Proteomes" id="UP000002440">
    <property type="component" value="Chromosome"/>
</dbReference>
<dbReference type="GO" id="GO:0022625">
    <property type="term" value="C:cytosolic large ribosomal subunit"/>
    <property type="evidence" value="ECO:0007669"/>
    <property type="project" value="TreeGrafter"/>
</dbReference>
<dbReference type="GO" id="GO:0019843">
    <property type="term" value="F:rRNA binding"/>
    <property type="evidence" value="ECO:0007669"/>
    <property type="project" value="UniProtKB-UniRule"/>
</dbReference>
<dbReference type="GO" id="GO:0003735">
    <property type="term" value="F:structural constituent of ribosome"/>
    <property type="evidence" value="ECO:0007669"/>
    <property type="project" value="InterPro"/>
</dbReference>
<dbReference type="GO" id="GO:0002181">
    <property type="term" value="P:cytoplasmic translation"/>
    <property type="evidence" value="ECO:0007669"/>
    <property type="project" value="TreeGrafter"/>
</dbReference>
<dbReference type="FunFam" id="3.90.930.12:FF:000001">
    <property type="entry name" value="50S ribosomal protein L6"/>
    <property type="match status" value="1"/>
</dbReference>
<dbReference type="Gene3D" id="3.90.930.12">
    <property type="entry name" value="Ribosomal protein L6, alpha-beta domain"/>
    <property type="match status" value="2"/>
</dbReference>
<dbReference type="HAMAP" id="MF_01365_B">
    <property type="entry name" value="Ribosomal_uL6_B"/>
    <property type="match status" value="1"/>
</dbReference>
<dbReference type="InterPro" id="IPR000702">
    <property type="entry name" value="Ribosomal_uL6-like"/>
</dbReference>
<dbReference type="InterPro" id="IPR036789">
    <property type="entry name" value="Ribosomal_uL6-like_a/b-dom_sf"/>
</dbReference>
<dbReference type="InterPro" id="IPR020040">
    <property type="entry name" value="Ribosomal_uL6_a/b-dom"/>
</dbReference>
<dbReference type="InterPro" id="IPR019906">
    <property type="entry name" value="Ribosomal_uL6_bac-type"/>
</dbReference>
<dbReference type="InterPro" id="IPR002358">
    <property type="entry name" value="Ribosomal_uL6_CS"/>
</dbReference>
<dbReference type="NCBIfam" id="TIGR03654">
    <property type="entry name" value="L6_bact"/>
    <property type="match status" value="1"/>
</dbReference>
<dbReference type="PANTHER" id="PTHR11655">
    <property type="entry name" value="60S/50S RIBOSOMAL PROTEIN L6/L9"/>
    <property type="match status" value="1"/>
</dbReference>
<dbReference type="PANTHER" id="PTHR11655:SF14">
    <property type="entry name" value="LARGE RIBOSOMAL SUBUNIT PROTEIN UL6M"/>
    <property type="match status" value="1"/>
</dbReference>
<dbReference type="Pfam" id="PF00347">
    <property type="entry name" value="Ribosomal_L6"/>
    <property type="match status" value="2"/>
</dbReference>
<dbReference type="PIRSF" id="PIRSF002162">
    <property type="entry name" value="Ribosomal_L6"/>
    <property type="match status" value="1"/>
</dbReference>
<dbReference type="PRINTS" id="PR00059">
    <property type="entry name" value="RIBOSOMALL6"/>
</dbReference>
<dbReference type="SUPFAM" id="SSF56053">
    <property type="entry name" value="Ribosomal protein L6"/>
    <property type="match status" value="2"/>
</dbReference>
<dbReference type="PROSITE" id="PS00525">
    <property type="entry name" value="RIBOSOMAL_L6_1"/>
    <property type="match status" value="1"/>
</dbReference>
<gene>
    <name evidence="1" type="primary">rplF</name>
    <name type="ordered locus">Mfla_0294</name>
</gene>
<accession>Q1H4M2</accession>
<proteinExistence type="inferred from homology"/>
<organism>
    <name type="scientific">Methylobacillus flagellatus (strain ATCC 51484 / DSM 6875 / VKM B-1610 / KT)</name>
    <dbReference type="NCBI Taxonomy" id="265072"/>
    <lineage>
        <taxon>Bacteria</taxon>
        <taxon>Pseudomonadati</taxon>
        <taxon>Pseudomonadota</taxon>
        <taxon>Betaproteobacteria</taxon>
        <taxon>Nitrosomonadales</taxon>
        <taxon>Methylophilaceae</taxon>
        <taxon>Methylobacillus</taxon>
    </lineage>
</organism>
<feature type="chain" id="PRO_0000265266" description="Large ribosomal subunit protein uL6">
    <location>
        <begin position="1"/>
        <end position="177"/>
    </location>
</feature>
<protein>
    <recommendedName>
        <fullName evidence="1">Large ribosomal subunit protein uL6</fullName>
    </recommendedName>
    <alternativeName>
        <fullName evidence="2">50S ribosomal protein L6</fullName>
    </alternativeName>
</protein>